<feature type="signal peptide" evidence="2">
    <location>
        <begin position="1"/>
        <end position="19"/>
    </location>
</feature>
<feature type="propeptide" id="PRO_0000006805">
    <location>
        <begin position="20"/>
        <end position="66"/>
    </location>
</feature>
<feature type="peptide" id="PRO_0000006806" description="Neutrophil defensin 8">
    <location>
        <begin position="67"/>
        <end position="96"/>
    </location>
</feature>
<feature type="disulfide bond" evidence="1">
    <location>
        <begin position="68"/>
        <end position="96"/>
    </location>
</feature>
<feature type="disulfide bond" evidence="1">
    <location>
        <begin position="70"/>
        <end position="85"/>
    </location>
</feature>
<feature type="disulfide bond" evidence="1">
    <location>
        <begin position="75"/>
        <end position="95"/>
    </location>
</feature>
<comment type="function">
    <text>Probable antibiotic and antifungal activity.</text>
</comment>
<comment type="subcellular location">
    <subcellularLocation>
        <location evidence="1">Secreted</location>
    </subcellularLocation>
</comment>
<comment type="similarity">
    <text evidence="3">Belongs to the alpha-defensin family.</text>
</comment>
<reference key="1">
    <citation type="journal article" date="1999" name="Infect. Immun.">
        <title>Isolation, characterization, cDNA cloning, and antimicrobial properties of two distinct subfamilies of alpha-defensins from rhesus macaque leukocytes.</title>
        <authorList>
            <person name="Tang Y.Q."/>
            <person name="Yuan J."/>
            <person name="Miller C.J."/>
            <person name="Selsted M.E."/>
        </authorList>
    </citation>
    <scope>NUCLEOTIDE SEQUENCE [MRNA]</scope>
    <source>
        <tissue>Bone marrow</tissue>
        <tissue>Leukocyte</tissue>
    </source>
</reference>
<name>DEF8_MACMU</name>
<sequence length="96" mass="10643">MRTLVILAAILLVALQAQAEPLQARTDEATAAQEQIPTDNPEVVVSLAWDESLAPKDSVPGLRKNMACYCRIPACLAGERRYGTCFYLRRVWAFCC</sequence>
<organism>
    <name type="scientific">Macaca mulatta</name>
    <name type="common">Rhesus macaque</name>
    <dbReference type="NCBI Taxonomy" id="9544"/>
    <lineage>
        <taxon>Eukaryota</taxon>
        <taxon>Metazoa</taxon>
        <taxon>Chordata</taxon>
        <taxon>Craniata</taxon>
        <taxon>Vertebrata</taxon>
        <taxon>Euteleostomi</taxon>
        <taxon>Mammalia</taxon>
        <taxon>Eutheria</taxon>
        <taxon>Euarchontoglires</taxon>
        <taxon>Primates</taxon>
        <taxon>Haplorrhini</taxon>
        <taxon>Catarrhini</taxon>
        <taxon>Cercopithecidae</taxon>
        <taxon>Cercopithecinae</taxon>
        <taxon>Macaca</taxon>
    </lineage>
</organism>
<dbReference type="EMBL" id="AF188270">
    <property type="protein sequence ID" value="AAF06314.1"/>
    <property type="molecule type" value="mRNA"/>
</dbReference>
<dbReference type="SMR" id="P60032"/>
<dbReference type="FunCoup" id="P60032">
    <property type="interactions" value="414"/>
</dbReference>
<dbReference type="InParanoid" id="P60032"/>
<dbReference type="Proteomes" id="UP000006718">
    <property type="component" value="Unassembled WGS sequence"/>
</dbReference>
<dbReference type="GO" id="GO:0005615">
    <property type="term" value="C:extracellular space"/>
    <property type="evidence" value="ECO:0000318"/>
    <property type="project" value="GO_Central"/>
</dbReference>
<dbReference type="GO" id="GO:0019731">
    <property type="term" value="P:antibacterial humoral response"/>
    <property type="evidence" value="ECO:0000318"/>
    <property type="project" value="GO_Central"/>
</dbReference>
<dbReference type="GO" id="GO:0061844">
    <property type="term" value="P:antimicrobial humoral immune response mediated by antimicrobial peptide"/>
    <property type="evidence" value="ECO:0000318"/>
    <property type="project" value="GO_Central"/>
</dbReference>
<dbReference type="GO" id="GO:0071222">
    <property type="term" value="P:cellular response to lipopolysaccharide"/>
    <property type="evidence" value="ECO:0000318"/>
    <property type="project" value="GO_Central"/>
</dbReference>
<dbReference type="GO" id="GO:0050832">
    <property type="term" value="P:defense response to fungus"/>
    <property type="evidence" value="ECO:0007669"/>
    <property type="project" value="UniProtKB-KW"/>
</dbReference>
<dbReference type="GO" id="GO:0050829">
    <property type="term" value="P:defense response to Gram-negative bacterium"/>
    <property type="evidence" value="ECO:0000318"/>
    <property type="project" value="GO_Central"/>
</dbReference>
<dbReference type="GO" id="GO:0050830">
    <property type="term" value="P:defense response to Gram-positive bacterium"/>
    <property type="evidence" value="ECO:0000318"/>
    <property type="project" value="GO_Central"/>
</dbReference>
<dbReference type="GO" id="GO:0051673">
    <property type="term" value="P:disruption of plasma membrane integrity in another organism"/>
    <property type="evidence" value="ECO:0000318"/>
    <property type="project" value="GO_Central"/>
</dbReference>
<dbReference type="GO" id="GO:0002227">
    <property type="term" value="P:innate immune response in mucosa"/>
    <property type="evidence" value="ECO:0000318"/>
    <property type="project" value="GO_Central"/>
</dbReference>
<dbReference type="GO" id="GO:0031640">
    <property type="term" value="P:killing of cells of another organism"/>
    <property type="evidence" value="ECO:0007669"/>
    <property type="project" value="UniProtKB-KW"/>
</dbReference>
<dbReference type="InterPro" id="IPR016327">
    <property type="entry name" value="Alpha-defensin"/>
</dbReference>
<dbReference type="InterPro" id="IPR006081">
    <property type="entry name" value="Alpha-defensin_C"/>
</dbReference>
<dbReference type="InterPro" id="IPR002366">
    <property type="entry name" value="Alpha-defensin_N"/>
</dbReference>
<dbReference type="InterPro" id="IPR006080">
    <property type="entry name" value="Beta/alpha-defensin_C"/>
</dbReference>
<dbReference type="PANTHER" id="PTHR11876">
    <property type="entry name" value="ALPHA-DEFENSIN 1"/>
    <property type="match status" value="1"/>
</dbReference>
<dbReference type="PANTHER" id="PTHR11876:SF19">
    <property type="entry name" value="NEUTROPHIL DEFENSIN 1-RELATED"/>
    <property type="match status" value="1"/>
</dbReference>
<dbReference type="Pfam" id="PF00323">
    <property type="entry name" value="Defensin_1"/>
    <property type="match status" value="1"/>
</dbReference>
<dbReference type="Pfam" id="PF00879">
    <property type="entry name" value="Defensin_propep"/>
    <property type="match status" value="1"/>
</dbReference>
<dbReference type="PIRSF" id="PIRSF001875">
    <property type="entry name" value="Alpha-defensin"/>
    <property type="match status" value="1"/>
</dbReference>
<dbReference type="SMART" id="SM01418">
    <property type="entry name" value="Defensin_propep"/>
    <property type="match status" value="1"/>
</dbReference>
<dbReference type="SMART" id="SM00048">
    <property type="entry name" value="DEFSN"/>
    <property type="match status" value="1"/>
</dbReference>
<dbReference type="SUPFAM" id="SSF57392">
    <property type="entry name" value="Defensin-like"/>
    <property type="match status" value="1"/>
</dbReference>
<dbReference type="PROSITE" id="PS00269">
    <property type="entry name" value="DEFENSIN"/>
    <property type="match status" value="1"/>
</dbReference>
<accession>P60032</accession>
<accession>P82318</accession>
<keyword id="KW-0044">Antibiotic</keyword>
<keyword id="KW-0929">Antimicrobial</keyword>
<keyword id="KW-0211">Defensin</keyword>
<keyword id="KW-1015">Disulfide bond</keyword>
<keyword id="KW-0295">Fungicide</keyword>
<keyword id="KW-1185">Reference proteome</keyword>
<keyword id="KW-0964">Secreted</keyword>
<keyword id="KW-0732">Signal</keyword>
<proteinExistence type="inferred from homology"/>
<evidence type="ECO:0000250" key="1"/>
<evidence type="ECO:0000255" key="2"/>
<evidence type="ECO:0000305" key="3"/>
<protein>
    <recommendedName>
        <fullName>Neutrophil defensin 8</fullName>
    </recommendedName>
    <alternativeName>
        <fullName>RMAD-8</fullName>
    </alternativeName>
</protein>